<feature type="chain" id="PRO_0000148661" description="Argininosuccinate synthase">
    <location>
        <begin position="1"/>
        <end position="403"/>
    </location>
</feature>
<feature type="binding site" evidence="1">
    <location>
        <begin position="13"/>
        <end position="21"/>
    </location>
    <ligand>
        <name>ATP</name>
        <dbReference type="ChEBI" id="CHEBI:30616"/>
    </ligand>
</feature>
<feature type="binding site" evidence="1">
    <location>
        <position position="40"/>
    </location>
    <ligand>
        <name>ATP</name>
        <dbReference type="ChEBI" id="CHEBI:30616"/>
    </ligand>
</feature>
<feature type="binding site" evidence="1">
    <location>
        <position position="92"/>
    </location>
    <ligand>
        <name>L-citrulline</name>
        <dbReference type="ChEBI" id="CHEBI:57743"/>
    </ligand>
</feature>
<feature type="binding site" evidence="1">
    <location>
        <position position="97"/>
    </location>
    <ligand>
        <name>L-citrulline</name>
        <dbReference type="ChEBI" id="CHEBI:57743"/>
    </ligand>
</feature>
<feature type="binding site" evidence="1">
    <location>
        <position position="122"/>
    </location>
    <ligand>
        <name>ATP</name>
        <dbReference type="ChEBI" id="CHEBI:30616"/>
    </ligand>
</feature>
<feature type="binding site" evidence="1">
    <location>
        <position position="124"/>
    </location>
    <ligand>
        <name>L-aspartate</name>
        <dbReference type="ChEBI" id="CHEBI:29991"/>
    </ligand>
</feature>
<feature type="binding site" evidence="1">
    <location>
        <position position="128"/>
    </location>
    <ligand>
        <name>L-aspartate</name>
        <dbReference type="ChEBI" id="CHEBI:29991"/>
    </ligand>
</feature>
<feature type="binding site" evidence="1">
    <location>
        <position position="128"/>
    </location>
    <ligand>
        <name>L-citrulline</name>
        <dbReference type="ChEBI" id="CHEBI:57743"/>
    </ligand>
</feature>
<feature type="binding site" evidence="1">
    <location>
        <position position="129"/>
    </location>
    <ligand>
        <name>L-aspartate</name>
        <dbReference type="ChEBI" id="CHEBI:29991"/>
    </ligand>
</feature>
<feature type="binding site" evidence="1">
    <location>
        <position position="132"/>
    </location>
    <ligand>
        <name>L-citrulline</name>
        <dbReference type="ChEBI" id="CHEBI:57743"/>
    </ligand>
</feature>
<feature type="binding site" evidence="1">
    <location>
        <position position="181"/>
    </location>
    <ligand>
        <name>L-citrulline</name>
        <dbReference type="ChEBI" id="CHEBI:57743"/>
    </ligand>
</feature>
<feature type="binding site" evidence="1">
    <location>
        <position position="190"/>
    </location>
    <ligand>
        <name>L-citrulline</name>
        <dbReference type="ChEBI" id="CHEBI:57743"/>
    </ligand>
</feature>
<feature type="binding site" evidence="1">
    <location>
        <position position="266"/>
    </location>
    <ligand>
        <name>L-citrulline</name>
        <dbReference type="ChEBI" id="CHEBI:57743"/>
    </ligand>
</feature>
<feature type="binding site" evidence="1">
    <location>
        <position position="278"/>
    </location>
    <ligand>
        <name>L-citrulline</name>
        <dbReference type="ChEBI" id="CHEBI:57743"/>
    </ligand>
</feature>
<sequence length="403" mass="44392">MSKKVEVNKVVVAYSGGLDTSVIIPWLKENYNCEVIAFVADVGQGEEELEGIEAKAIASGATECYVVDLKEEMVSEYIFPTLKTGALYEGKYLLGTSMARPIIAKAQVEVARNVGADALCHGCTGKGNDQIRFEGAFAALAPDLHVIAPWREWDLVSREECLDYLAERNIPCTASLTKIYSRDANAWHISTEGGVLEETWNAPNDDCWAWTVDPEQAPNESETISLKVEKGAVVAVDGKAMTPYEVVVYLNEKGAKHGVGRIDIVENRLVGMKSRGCYETPGGTIINEALRAVEQLVLDKTSFEFREELGIKASHLVYDGRWFTPLCKSILAASEELAKDVNGEVVIKLYKGHATVIQKRSDNSLYSEEFATFGADEVYDQSHAEGFIRLYSLSSRIRALNSK</sequence>
<protein>
    <recommendedName>
        <fullName evidence="1">Argininosuccinate synthase</fullName>
        <ecNumber evidence="1">6.3.4.5</ecNumber>
    </recommendedName>
    <alternativeName>
        <fullName evidence="1">Citrulline--aspartate ligase</fullName>
    </alternativeName>
</protein>
<comment type="catalytic activity">
    <reaction evidence="1">
        <text>L-citrulline + L-aspartate + ATP = 2-(N(omega)-L-arginino)succinate + AMP + diphosphate + H(+)</text>
        <dbReference type="Rhea" id="RHEA:10932"/>
        <dbReference type="ChEBI" id="CHEBI:15378"/>
        <dbReference type="ChEBI" id="CHEBI:29991"/>
        <dbReference type="ChEBI" id="CHEBI:30616"/>
        <dbReference type="ChEBI" id="CHEBI:33019"/>
        <dbReference type="ChEBI" id="CHEBI:57472"/>
        <dbReference type="ChEBI" id="CHEBI:57743"/>
        <dbReference type="ChEBI" id="CHEBI:456215"/>
        <dbReference type="EC" id="6.3.4.5"/>
    </reaction>
</comment>
<comment type="pathway">
    <text evidence="1">Amino-acid biosynthesis; L-arginine biosynthesis; L-arginine from L-ornithine and carbamoyl phosphate: step 2/3.</text>
</comment>
<comment type="subunit">
    <text evidence="1">Homotetramer.</text>
</comment>
<comment type="subcellular location">
    <subcellularLocation>
        <location evidence="1">Cytoplasm</location>
    </subcellularLocation>
</comment>
<comment type="similarity">
    <text evidence="1">Belongs to the argininosuccinate synthase family. Type 1 subfamily.</text>
</comment>
<evidence type="ECO:0000255" key="1">
    <source>
        <dbReference type="HAMAP-Rule" id="MF_00005"/>
    </source>
</evidence>
<dbReference type="EC" id="6.3.4.5" evidence="1"/>
<dbReference type="EMBL" id="CP000020">
    <property type="protein sequence ID" value="AAW86799.1"/>
    <property type="molecule type" value="Genomic_DNA"/>
</dbReference>
<dbReference type="RefSeq" id="WP_011262711.1">
    <property type="nucleotide sequence ID" value="NC_006840.2"/>
</dbReference>
<dbReference type="RefSeq" id="YP_205687.1">
    <property type="nucleotide sequence ID" value="NC_006840.2"/>
</dbReference>
<dbReference type="SMR" id="Q5E2E7"/>
<dbReference type="STRING" id="312309.VF_2304"/>
<dbReference type="EnsemblBacteria" id="AAW86799">
    <property type="protein sequence ID" value="AAW86799"/>
    <property type="gene ID" value="VF_2304"/>
</dbReference>
<dbReference type="GeneID" id="54165019"/>
<dbReference type="KEGG" id="vfi:VF_2304"/>
<dbReference type="PATRIC" id="fig|312309.11.peg.2342"/>
<dbReference type="eggNOG" id="COG0137">
    <property type="taxonomic scope" value="Bacteria"/>
</dbReference>
<dbReference type="HOGENOM" id="CLU_032784_4_2_6"/>
<dbReference type="OrthoDB" id="9801641at2"/>
<dbReference type="UniPathway" id="UPA00068">
    <property type="reaction ID" value="UER00113"/>
</dbReference>
<dbReference type="Proteomes" id="UP000000537">
    <property type="component" value="Chromosome I"/>
</dbReference>
<dbReference type="GO" id="GO:0005737">
    <property type="term" value="C:cytoplasm"/>
    <property type="evidence" value="ECO:0007669"/>
    <property type="project" value="UniProtKB-SubCell"/>
</dbReference>
<dbReference type="GO" id="GO:0004055">
    <property type="term" value="F:argininosuccinate synthase activity"/>
    <property type="evidence" value="ECO:0007669"/>
    <property type="project" value="UniProtKB-UniRule"/>
</dbReference>
<dbReference type="GO" id="GO:0005524">
    <property type="term" value="F:ATP binding"/>
    <property type="evidence" value="ECO:0007669"/>
    <property type="project" value="UniProtKB-UniRule"/>
</dbReference>
<dbReference type="GO" id="GO:0000053">
    <property type="term" value="P:argininosuccinate metabolic process"/>
    <property type="evidence" value="ECO:0007669"/>
    <property type="project" value="TreeGrafter"/>
</dbReference>
<dbReference type="GO" id="GO:0006526">
    <property type="term" value="P:L-arginine biosynthetic process"/>
    <property type="evidence" value="ECO:0007669"/>
    <property type="project" value="UniProtKB-UniRule"/>
</dbReference>
<dbReference type="GO" id="GO:0000050">
    <property type="term" value="P:urea cycle"/>
    <property type="evidence" value="ECO:0007669"/>
    <property type="project" value="TreeGrafter"/>
</dbReference>
<dbReference type="CDD" id="cd01999">
    <property type="entry name" value="ASS"/>
    <property type="match status" value="1"/>
</dbReference>
<dbReference type="FunFam" id="3.40.50.620:FF:000019">
    <property type="entry name" value="Argininosuccinate synthase"/>
    <property type="match status" value="1"/>
</dbReference>
<dbReference type="FunFam" id="3.90.1260.10:FF:000007">
    <property type="entry name" value="Argininosuccinate synthase"/>
    <property type="match status" value="1"/>
</dbReference>
<dbReference type="Gene3D" id="3.90.1260.10">
    <property type="entry name" value="Argininosuccinate synthetase, chain A, domain 2"/>
    <property type="match status" value="1"/>
</dbReference>
<dbReference type="Gene3D" id="3.40.50.620">
    <property type="entry name" value="HUPs"/>
    <property type="match status" value="1"/>
</dbReference>
<dbReference type="Gene3D" id="1.20.5.470">
    <property type="entry name" value="Single helix bin"/>
    <property type="match status" value="1"/>
</dbReference>
<dbReference type="HAMAP" id="MF_00005">
    <property type="entry name" value="Arg_succ_synth_type1"/>
    <property type="match status" value="1"/>
</dbReference>
<dbReference type="InterPro" id="IPR048268">
    <property type="entry name" value="Arginosuc_syn_C"/>
</dbReference>
<dbReference type="InterPro" id="IPR048267">
    <property type="entry name" value="Arginosuc_syn_N"/>
</dbReference>
<dbReference type="InterPro" id="IPR001518">
    <property type="entry name" value="Arginosuc_synth"/>
</dbReference>
<dbReference type="InterPro" id="IPR018223">
    <property type="entry name" value="Arginosuc_synth_CS"/>
</dbReference>
<dbReference type="InterPro" id="IPR023434">
    <property type="entry name" value="Arginosuc_synth_type_1_subfam"/>
</dbReference>
<dbReference type="InterPro" id="IPR024074">
    <property type="entry name" value="AS_cat/multimer_dom_body"/>
</dbReference>
<dbReference type="InterPro" id="IPR014729">
    <property type="entry name" value="Rossmann-like_a/b/a_fold"/>
</dbReference>
<dbReference type="NCBIfam" id="TIGR00032">
    <property type="entry name" value="argG"/>
    <property type="match status" value="1"/>
</dbReference>
<dbReference type="NCBIfam" id="NF001770">
    <property type="entry name" value="PRK00509.1"/>
    <property type="match status" value="1"/>
</dbReference>
<dbReference type="PANTHER" id="PTHR11587">
    <property type="entry name" value="ARGININOSUCCINATE SYNTHASE"/>
    <property type="match status" value="1"/>
</dbReference>
<dbReference type="PANTHER" id="PTHR11587:SF2">
    <property type="entry name" value="ARGININOSUCCINATE SYNTHASE"/>
    <property type="match status" value="1"/>
</dbReference>
<dbReference type="Pfam" id="PF20979">
    <property type="entry name" value="Arginosuc_syn_C"/>
    <property type="match status" value="1"/>
</dbReference>
<dbReference type="Pfam" id="PF00764">
    <property type="entry name" value="Arginosuc_synth"/>
    <property type="match status" value="1"/>
</dbReference>
<dbReference type="SUPFAM" id="SSF52402">
    <property type="entry name" value="Adenine nucleotide alpha hydrolases-like"/>
    <property type="match status" value="1"/>
</dbReference>
<dbReference type="SUPFAM" id="SSF69864">
    <property type="entry name" value="Argininosuccinate synthetase, C-terminal domain"/>
    <property type="match status" value="1"/>
</dbReference>
<dbReference type="PROSITE" id="PS00564">
    <property type="entry name" value="ARGININOSUCCIN_SYN_1"/>
    <property type="match status" value="1"/>
</dbReference>
<dbReference type="PROSITE" id="PS00565">
    <property type="entry name" value="ARGININOSUCCIN_SYN_2"/>
    <property type="match status" value="1"/>
</dbReference>
<accession>Q5E2E7</accession>
<reference key="1">
    <citation type="journal article" date="2005" name="Proc. Natl. Acad. Sci. U.S.A.">
        <title>Complete genome sequence of Vibrio fischeri: a symbiotic bacterium with pathogenic congeners.</title>
        <authorList>
            <person name="Ruby E.G."/>
            <person name="Urbanowski M."/>
            <person name="Campbell J."/>
            <person name="Dunn A."/>
            <person name="Faini M."/>
            <person name="Gunsalus R."/>
            <person name="Lostroh P."/>
            <person name="Lupp C."/>
            <person name="McCann J."/>
            <person name="Millikan D."/>
            <person name="Schaefer A."/>
            <person name="Stabb E."/>
            <person name="Stevens A."/>
            <person name="Visick K."/>
            <person name="Whistler C."/>
            <person name="Greenberg E.P."/>
        </authorList>
    </citation>
    <scope>NUCLEOTIDE SEQUENCE [LARGE SCALE GENOMIC DNA]</scope>
    <source>
        <strain>ATCC 700601 / ES114</strain>
    </source>
</reference>
<organism>
    <name type="scientific">Aliivibrio fischeri (strain ATCC 700601 / ES114)</name>
    <name type="common">Vibrio fischeri</name>
    <dbReference type="NCBI Taxonomy" id="312309"/>
    <lineage>
        <taxon>Bacteria</taxon>
        <taxon>Pseudomonadati</taxon>
        <taxon>Pseudomonadota</taxon>
        <taxon>Gammaproteobacteria</taxon>
        <taxon>Vibrionales</taxon>
        <taxon>Vibrionaceae</taxon>
        <taxon>Aliivibrio</taxon>
    </lineage>
</organism>
<name>ASSY_ALIF1</name>
<gene>
    <name evidence="1" type="primary">argG</name>
    <name type="ordered locus">VF_2304</name>
</gene>
<keyword id="KW-0028">Amino-acid biosynthesis</keyword>
<keyword id="KW-0055">Arginine biosynthesis</keyword>
<keyword id="KW-0067">ATP-binding</keyword>
<keyword id="KW-0963">Cytoplasm</keyword>
<keyword id="KW-0436">Ligase</keyword>
<keyword id="KW-0547">Nucleotide-binding</keyword>
<keyword id="KW-1185">Reference proteome</keyword>
<proteinExistence type="inferred from homology"/>